<gene>
    <name evidence="1" type="primary">nuoB</name>
    <name type="ordered locus">YPDSF_1964</name>
</gene>
<protein>
    <recommendedName>
        <fullName evidence="1">NADH-quinone oxidoreductase subunit B</fullName>
        <ecNumber evidence="1">7.1.1.-</ecNumber>
    </recommendedName>
    <alternativeName>
        <fullName evidence="1">NADH dehydrogenase I subunit B</fullName>
    </alternativeName>
    <alternativeName>
        <fullName evidence="1">NDH-1 subunit B</fullName>
    </alternativeName>
</protein>
<dbReference type="EC" id="7.1.1.-" evidence="1"/>
<dbReference type="EMBL" id="CP000668">
    <property type="protein sequence ID" value="ABP40347.1"/>
    <property type="molecule type" value="Genomic_DNA"/>
</dbReference>
<dbReference type="RefSeq" id="WP_002210278.1">
    <property type="nucleotide sequence ID" value="NZ_CP009715.1"/>
</dbReference>
<dbReference type="SMR" id="A4TM35"/>
<dbReference type="KEGG" id="ypp:YPDSF_1964"/>
<dbReference type="PATRIC" id="fig|386656.14.peg.3429"/>
<dbReference type="GO" id="GO:0005886">
    <property type="term" value="C:plasma membrane"/>
    <property type="evidence" value="ECO:0007669"/>
    <property type="project" value="UniProtKB-SubCell"/>
</dbReference>
<dbReference type="GO" id="GO:0045271">
    <property type="term" value="C:respiratory chain complex I"/>
    <property type="evidence" value="ECO:0007669"/>
    <property type="project" value="TreeGrafter"/>
</dbReference>
<dbReference type="GO" id="GO:0051539">
    <property type="term" value="F:4 iron, 4 sulfur cluster binding"/>
    <property type="evidence" value="ECO:0007669"/>
    <property type="project" value="UniProtKB-KW"/>
</dbReference>
<dbReference type="GO" id="GO:0005506">
    <property type="term" value="F:iron ion binding"/>
    <property type="evidence" value="ECO:0007669"/>
    <property type="project" value="UniProtKB-UniRule"/>
</dbReference>
<dbReference type="GO" id="GO:0008137">
    <property type="term" value="F:NADH dehydrogenase (ubiquinone) activity"/>
    <property type="evidence" value="ECO:0007669"/>
    <property type="project" value="InterPro"/>
</dbReference>
<dbReference type="GO" id="GO:0050136">
    <property type="term" value="F:NADH:ubiquinone reductase (non-electrogenic) activity"/>
    <property type="evidence" value="ECO:0007669"/>
    <property type="project" value="UniProtKB-UniRule"/>
</dbReference>
<dbReference type="GO" id="GO:0048038">
    <property type="term" value="F:quinone binding"/>
    <property type="evidence" value="ECO:0007669"/>
    <property type="project" value="UniProtKB-KW"/>
</dbReference>
<dbReference type="GO" id="GO:0009060">
    <property type="term" value="P:aerobic respiration"/>
    <property type="evidence" value="ECO:0007669"/>
    <property type="project" value="TreeGrafter"/>
</dbReference>
<dbReference type="GO" id="GO:0015990">
    <property type="term" value="P:electron transport coupled proton transport"/>
    <property type="evidence" value="ECO:0007669"/>
    <property type="project" value="TreeGrafter"/>
</dbReference>
<dbReference type="FunFam" id="3.40.50.12280:FF:000002">
    <property type="entry name" value="NADH-quinone oxidoreductase subunit B"/>
    <property type="match status" value="1"/>
</dbReference>
<dbReference type="Gene3D" id="3.40.50.12280">
    <property type="match status" value="1"/>
</dbReference>
<dbReference type="HAMAP" id="MF_01356">
    <property type="entry name" value="NDH1_NuoB"/>
    <property type="match status" value="1"/>
</dbReference>
<dbReference type="InterPro" id="IPR006137">
    <property type="entry name" value="NADH_UbQ_OxRdtase-like_20kDa"/>
</dbReference>
<dbReference type="InterPro" id="IPR006138">
    <property type="entry name" value="NADH_UQ_OxRdtase_20Kd_su"/>
</dbReference>
<dbReference type="NCBIfam" id="TIGR01957">
    <property type="entry name" value="nuoB_fam"/>
    <property type="match status" value="1"/>
</dbReference>
<dbReference type="NCBIfam" id="NF005012">
    <property type="entry name" value="PRK06411.1"/>
    <property type="match status" value="1"/>
</dbReference>
<dbReference type="PANTHER" id="PTHR11995">
    <property type="entry name" value="NADH DEHYDROGENASE"/>
    <property type="match status" value="1"/>
</dbReference>
<dbReference type="PANTHER" id="PTHR11995:SF14">
    <property type="entry name" value="NADH DEHYDROGENASE [UBIQUINONE] IRON-SULFUR PROTEIN 7, MITOCHONDRIAL"/>
    <property type="match status" value="1"/>
</dbReference>
<dbReference type="Pfam" id="PF01058">
    <property type="entry name" value="Oxidored_q6"/>
    <property type="match status" value="1"/>
</dbReference>
<dbReference type="SUPFAM" id="SSF56770">
    <property type="entry name" value="HydA/Nqo6-like"/>
    <property type="match status" value="1"/>
</dbReference>
<dbReference type="PROSITE" id="PS01150">
    <property type="entry name" value="COMPLEX1_20K"/>
    <property type="match status" value="1"/>
</dbReference>
<organism>
    <name type="scientific">Yersinia pestis (strain Pestoides F)</name>
    <dbReference type="NCBI Taxonomy" id="386656"/>
    <lineage>
        <taxon>Bacteria</taxon>
        <taxon>Pseudomonadati</taxon>
        <taxon>Pseudomonadota</taxon>
        <taxon>Gammaproteobacteria</taxon>
        <taxon>Enterobacterales</taxon>
        <taxon>Yersiniaceae</taxon>
        <taxon>Yersinia</taxon>
    </lineage>
</organism>
<reference key="1">
    <citation type="submission" date="2007-02" db="EMBL/GenBank/DDBJ databases">
        <title>Complete sequence of chromosome of Yersinia pestis Pestoides F.</title>
        <authorList>
            <consortium name="US DOE Joint Genome Institute"/>
            <person name="Copeland A."/>
            <person name="Lucas S."/>
            <person name="Lapidus A."/>
            <person name="Barry K."/>
            <person name="Detter J.C."/>
            <person name="Glavina del Rio T."/>
            <person name="Hammon N."/>
            <person name="Israni S."/>
            <person name="Dalin E."/>
            <person name="Tice H."/>
            <person name="Pitluck S."/>
            <person name="Di Bartolo G."/>
            <person name="Chain P."/>
            <person name="Malfatti S."/>
            <person name="Shin M."/>
            <person name="Vergez L."/>
            <person name="Schmutz J."/>
            <person name="Larimer F."/>
            <person name="Land M."/>
            <person name="Hauser L."/>
            <person name="Worsham P."/>
            <person name="Chu M."/>
            <person name="Bearden S."/>
            <person name="Garcia E."/>
            <person name="Richardson P."/>
        </authorList>
    </citation>
    <scope>NUCLEOTIDE SEQUENCE [LARGE SCALE GENOMIC DNA]</scope>
    <source>
        <strain>Pestoides F</strain>
    </source>
</reference>
<sequence>MDYTLTRIDPNGENDRYPLQTQETVSGDPLEQHVHRSVYMGKLENAMHDMVNWGRKNSLWPYNFGLSCCYVEMVTSFTAVHDVARFGAEVLRASPRQADFMVVAGTCFTKMAPVIQRLYEQMLEPKWVISMGACANSGGMYDIYSVVQGVDKFLPVDVYIPGCPPRPEAYMQALLLLQESIGKERRPLSWVVGDQGVYRANMQPERERKHAERIAVTNLRTPDEI</sequence>
<keyword id="KW-0004">4Fe-4S</keyword>
<keyword id="KW-0997">Cell inner membrane</keyword>
<keyword id="KW-1003">Cell membrane</keyword>
<keyword id="KW-0408">Iron</keyword>
<keyword id="KW-0411">Iron-sulfur</keyword>
<keyword id="KW-0472">Membrane</keyword>
<keyword id="KW-0479">Metal-binding</keyword>
<keyword id="KW-0520">NAD</keyword>
<keyword id="KW-0874">Quinone</keyword>
<keyword id="KW-1278">Translocase</keyword>
<keyword id="KW-0813">Transport</keyword>
<keyword id="KW-0830">Ubiquinone</keyword>
<comment type="function">
    <text evidence="1">NDH-1 shuttles electrons from NADH, via FMN and iron-sulfur (Fe-S) centers, to quinones in the respiratory chain. The immediate electron acceptor for the enzyme in this species is believed to be ubiquinone. Couples the redox reaction to proton translocation (for every two electrons transferred, four hydrogen ions are translocated across the cytoplasmic membrane), and thus conserves the redox energy in a proton gradient.</text>
</comment>
<comment type="catalytic activity">
    <reaction evidence="1">
        <text>a quinone + NADH + 5 H(+)(in) = a quinol + NAD(+) + 4 H(+)(out)</text>
        <dbReference type="Rhea" id="RHEA:57888"/>
        <dbReference type="ChEBI" id="CHEBI:15378"/>
        <dbReference type="ChEBI" id="CHEBI:24646"/>
        <dbReference type="ChEBI" id="CHEBI:57540"/>
        <dbReference type="ChEBI" id="CHEBI:57945"/>
        <dbReference type="ChEBI" id="CHEBI:132124"/>
    </reaction>
</comment>
<comment type="cofactor">
    <cofactor evidence="1">
        <name>[4Fe-4S] cluster</name>
        <dbReference type="ChEBI" id="CHEBI:49883"/>
    </cofactor>
    <text evidence="1">Binds 1 [4Fe-4S] cluster.</text>
</comment>
<comment type="subunit">
    <text evidence="1">NDH-1 is composed of 13 different subunits. Subunits NuoB, CD, E, F, and G constitute the peripheral sector of the complex.</text>
</comment>
<comment type="subcellular location">
    <subcellularLocation>
        <location evidence="1">Cell inner membrane</location>
        <topology evidence="1">Peripheral membrane protein</topology>
        <orientation evidence="1">Cytoplasmic side</orientation>
    </subcellularLocation>
</comment>
<comment type="similarity">
    <text evidence="1">Belongs to the complex I 20 kDa subunit family.</text>
</comment>
<accession>A4TM35</accession>
<name>NUOB_YERPP</name>
<feature type="chain" id="PRO_0000376411" description="NADH-quinone oxidoreductase subunit B">
    <location>
        <begin position="1"/>
        <end position="225"/>
    </location>
</feature>
<feature type="binding site" evidence="1">
    <location>
        <position position="68"/>
    </location>
    <ligand>
        <name>[4Fe-4S] cluster</name>
        <dbReference type="ChEBI" id="CHEBI:49883"/>
    </ligand>
</feature>
<feature type="binding site" evidence="1">
    <location>
        <position position="69"/>
    </location>
    <ligand>
        <name>[4Fe-4S] cluster</name>
        <dbReference type="ChEBI" id="CHEBI:49883"/>
    </ligand>
</feature>
<feature type="binding site" evidence="1">
    <location>
        <position position="134"/>
    </location>
    <ligand>
        <name>[4Fe-4S] cluster</name>
        <dbReference type="ChEBI" id="CHEBI:49883"/>
    </ligand>
</feature>
<feature type="binding site" evidence="1">
    <location>
        <position position="163"/>
    </location>
    <ligand>
        <name>[4Fe-4S] cluster</name>
        <dbReference type="ChEBI" id="CHEBI:49883"/>
    </ligand>
</feature>
<proteinExistence type="inferred from homology"/>
<evidence type="ECO:0000255" key="1">
    <source>
        <dbReference type="HAMAP-Rule" id="MF_01356"/>
    </source>
</evidence>